<organism>
    <name type="scientific">Geotalea uraniireducens (strain Rf4)</name>
    <name type="common">Geobacter uraniireducens</name>
    <dbReference type="NCBI Taxonomy" id="351605"/>
    <lineage>
        <taxon>Bacteria</taxon>
        <taxon>Pseudomonadati</taxon>
        <taxon>Thermodesulfobacteriota</taxon>
        <taxon>Desulfuromonadia</taxon>
        <taxon>Geobacterales</taxon>
        <taxon>Geobacteraceae</taxon>
        <taxon>Geotalea</taxon>
    </lineage>
</organism>
<feature type="chain" id="PRO_1000078276" description="Adenylate kinase">
    <location>
        <begin position="1"/>
        <end position="217"/>
    </location>
</feature>
<feature type="region of interest" description="NMP" evidence="1">
    <location>
        <begin position="30"/>
        <end position="59"/>
    </location>
</feature>
<feature type="region of interest" description="LID" evidence="1">
    <location>
        <begin position="126"/>
        <end position="163"/>
    </location>
</feature>
<feature type="binding site" evidence="1">
    <location>
        <begin position="10"/>
        <end position="15"/>
    </location>
    <ligand>
        <name>ATP</name>
        <dbReference type="ChEBI" id="CHEBI:30616"/>
    </ligand>
</feature>
<feature type="binding site" evidence="1">
    <location>
        <position position="31"/>
    </location>
    <ligand>
        <name>AMP</name>
        <dbReference type="ChEBI" id="CHEBI:456215"/>
    </ligand>
</feature>
<feature type="binding site" evidence="1">
    <location>
        <position position="36"/>
    </location>
    <ligand>
        <name>AMP</name>
        <dbReference type="ChEBI" id="CHEBI:456215"/>
    </ligand>
</feature>
<feature type="binding site" evidence="1">
    <location>
        <begin position="57"/>
        <end position="59"/>
    </location>
    <ligand>
        <name>AMP</name>
        <dbReference type="ChEBI" id="CHEBI:456215"/>
    </ligand>
</feature>
<feature type="binding site" evidence="1">
    <location>
        <begin position="85"/>
        <end position="88"/>
    </location>
    <ligand>
        <name>AMP</name>
        <dbReference type="ChEBI" id="CHEBI:456215"/>
    </ligand>
</feature>
<feature type="binding site" evidence="1">
    <location>
        <position position="92"/>
    </location>
    <ligand>
        <name>AMP</name>
        <dbReference type="ChEBI" id="CHEBI:456215"/>
    </ligand>
</feature>
<feature type="binding site" evidence="1">
    <location>
        <position position="127"/>
    </location>
    <ligand>
        <name>ATP</name>
        <dbReference type="ChEBI" id="CHEBI:30616"/>
    </ligand>
</feature>
<feature type="binding site" evidence="1">
    <location>
        <position position="130"/>
    </location>
    <ligand>
        <name>Zn(2+)</name>
        <dbReference type="ChEBI" id="CHEBI:29105"/>
        <note>structural</note>
    </ligand>
</feature>
<feature type="binding site" evidence="1">
    <location>
        <position position="133"/>
    </location>
    <ligand>
        <name>Zn(2+)</name>
        <dbReference type="ChEBI" id="CHEBI:29105"/>
        <note>structural</note>
    </ligand>
</feature>
<feature type="binding site" evidence="1">
    <location>
        <position position="150"/>
    </location>
    <ligand>
        <name>Zn(2+)</name>
        <dbReference type="ChEBI" id="CHEBI:29105"/>
        <note>structural</note>
    </ligand>
</feature>
<feature type="binding site" evidence="1">
    <location>
        <position position="153"/>
    </location>
    <ligand>
        <name>Zn(2+)</name>
        <dbReference type="ChEBI" id="CHEBI:29105"/>
        <note>structural</note>
    </ligand>
</feature>
<feature type="binding site" evidence="1">
    <location>
        <position position="160"/>
    </location>
    <ligand>
        <name>AMP</name>
        <dbReference type="ChEBI" id="CHEBI:456215"/>
    </ligand>
</feature>
<feature type="binding site" evidence="1">
    <location>
        <position position="171"/>
    </location>
    <ligand>
        <name>AMP</name>
        <dbReference type="ChEBI" id="CHEBI:456215"/>
    </ligand>
</feature>
<feature type="binding site" evidence="1">
    <location>
        <position position="199"/>
    </location>
    <ligand>
        <name>ATP</name>
        <dbReference type="ChEBI" id="CHEBI:30616"/>
    </ligand>
</feature>
<dbReference type="EC" id="2.7.4.3" evidence="1"/>
<dbReference type="EMBL" id="CP000698">
    <property type="protein sequence ID" value="ABQ25293.1"/>
    <property type="molecule type" value="Genomic_DNA"/>
</dbReference>
<dbReference type="RefSeq" id="WP_011938015.1">
    <property type="nucleotide sequence ID" value="NC_009483.1"/>
</dbReference>
<dbReference type="SMR" id="A5GAW3"/>
<dbReference type="STRING" id="351605.Gura_1087"/>
<dbReference type="KEGG" id="gur:Gura_1087"/>
<dbReference type="HOGENOM" id="CLU_032354_1_2_7"/>
<dbReference type="OrthoDB" id="9805030at2"/>
<dbReference type="UniPathway" id="UPA00588">
    <property type="reaction ID" value="UER00649"/>
</dbReference>
<dbReference type="Proteomes" id="UP000006695">
    <property type="component" value="Chromosome"/>
</dbReference>
<dbReference type="GO" id="GO:0005737">
    <property type="term" value="C:cytoplasm"/>
    <property type="evidence" value="ECO:0007669"/>
    <property type="project" value="UniProtKB-SubCell"/>
</dbReference>
<dbReference type="GO" id="GO:0004017">
    <property type="term" value="F:adenylate kinase activity"/>
    <property type="evidence" value="ECO:0007669"/>
    <property type="project" value="UniProtKB-UniRule"/>
</dbReference>
<dbReference type="GO" id="GO:0005524">
    <property type="term" value="F:ATP binding"/>
    <property type="evidence" value="ECO:0007669"/>
    <property type="project" value="UniProtKB-UniRule"/>
</dbReference>
<dbReference type="GO" id="GO:0008270">
    <property type="term" value="F:zinc ion binding"/>
    <property type="evidence" value="ECO:0007669"/>
    <property type="project" value="UniProtKB-UniRule"/>
</dbReference>
<dbReference type="GO" id="GO:0044209">
    <property type="term" value="P:AMP salvage"/>
    <property type="evidence" value="ECO:0007669"/>
    <property type="project" value="UniProtKB-UniRule"/>
</dbReference>
<dbReference type="CDD" id="cd01428">
    <property type="entry name" value="ADK"/>
    <property type="match status" value="1"/>
</dbReference>
<dbReference type="FunFam" id="3.40.50.300:FF:000106">
    <property type="entry name" value="Adenylate kinase mitochondrial"/>
    <property type="match status" value="1"/>
</dbReference>
<dbReference type="Gene3D" id="3.40.50.300">
    <property type="entry name" value="P-loop containing nucleotide triphosphate hydrolases"/>
    <property type="match status" value="1"/>
</dbReference>
<dbReference type="HAMAP" id="MF_00235">
    <property type="entry name" value="Adenylate_kinase_Adk"/>
    <property type="match status" value="1"/>
</dbReference>
<dbReference type="InterPro" id="IPR006259">
    <property type="entry name" value="Adenyl_kin_sub"/>
</dbReference>
<dbReference type="InterPro" id="IPR000850">
    <property type="entry name" value="Adenylat/UMP-CMP_kin"/>
</dbReference>
<dbReference type="InterPro" id="IPR033690">
    <property type="entry name" value="Adenylat_kinase_CS"/>
</dbReference>
<dbReference type="InterPro" id="IPR007862">
    <property type="entry name" value="Adenylate_kinase_lid-dom"/>
</dbReference>
<dbReference type="InterPro" id="IPR027417">
    <property type="entry name" value="P-loop_NTPase"/>
</dbReference>
<dbReference type="NCBIfam" id="TIGR01351">
    <property type="entry name" value="adk"/>
    <property type="match status" value="1"/>
</dbReference>
<dbReference type="NCBIfam" id="NF001380">
    <property type="entry name" value="PRK00279.1-2"/>
    <property type="match status" value="1"/>
</dbReference>
<dbReference type="NCBIfam" id="NF001381">
    <property type="entry name" value="PRK00279.1-3"/>
    <property type="match status" value="1"/>
</dbReference>
<dbReference type="NCBIfam" id="NF011100">
    <property type="entry name" value="PRK14527.1"/>
    <property type="match status" value="1"/>
</dbReference>
<dbReference type="PANTHER" id="PTHR23359">
    <property type="entry name" value="NUCLEOTIDE KINASE"/>
    <property type="match status" value="1"/>
</dbReference>
<dbReference type="Pfam" id="PF00406">
    <property type="entry name" value="ADK"/>
    <property type="match status" value="1"/>
</dbReference>
<dbReference type="Pfam" id="PF05191">
    <property type="entry name" value="ADK_lid"/>
    <property type="match status" value="1"/>
</dbReference>
<dbReference type="PRINTS" id="PR00094">
    <property type="entry name" value="ADENYLTKNASE"/>
</dbReference>
<dbReference type="SUPFAM" id="SSF52540">
    <property type="entry name" value="P-loop containing nucleoside triphosphate hydrolases"/>
    <property type="match status" value="1"/>
</dbReference>
<dbReference type="PROSITE" id="PS00113">
    <property type="entry name" value="ADENYLATE_KINASE"/>
    <property type="match status" value="1"/>
</dbReference>
<name>KAD_GEOUR</name>
<accession>A5GAW3</accession>
<proteinExistence type="inferred from homology"/>
<evidence type="ECO:0000255" key="1">
    <source>
        <dbReference type="HAMAP-Rule" id="MF_00235"/>
    </source>
</evidence>
<comment type="function">
    <text evidence="1">Catalyzes the reversible transfer of the terminal phosphate group between ATP and AMP. Plays an important role in cellular energy homeostasis and in adenine nucleotide metabolism.</text>
</comment>
<comment type="catalytic activity">
    <reaction evidence="1">
        <text>AMP + ATP = 2 ADP</text>
        <dbReference type="Rhea" id="RHEA:12973"/>
        <dbReference type="ChEBI" id="CHEBI:30616"/>
        <dbReference type="ChEBI" id="CHEBI:456215"/>
        <dbReference type="ChEBI" id="CHEBI:456216"/>
        <dbReference type="EC" id="2.7.4.3"/>
    </reaction>
</comment>
<comment type="pathway">
    <text evidence="1">Purine metabolism; AMP biosynthesis via salvage pathway; AMP from ADP: step 1/1.</text>
</comment>
<comment type="subunit">
    <text evidence="1">Monomer.</text>
</comment>
<comment type="subcellular location">
    <subcellularLocation>
        <location evidence="1">Cytoplasm</location>
    </subcellularLocation>
</comment>
<comment type="domain">
    <text evidence="1">Consists of three domains, a large central CORE domain and two small peripheral domains, NMPbind and LID, which undergo movements during catalysis. The LID domain closes over the site of phosphoryl transfer upon ATP binding. Assembling and dissambling the active center during each catalytic cycle provides an effective means to prevent ATP hydrolysis. Some bacteria have evolved a zinc-coordinating structure that stabilizes the LID domain.</text>
</comment>
<comment type="similarity">
    <text evidence="1">Belongs to the adenylate kinase family.</text>
</comment>
<gene>
    <name evidence="1" type="primary">adk</name>
    <name type="ordered locus">Gura_1087</name>
</gene>
<reference key="1">
    <citation type="submission" date="2007-05" db="EMBL/GenBank/DDBJ databases">
        <title>Complete sequence of Geobacter uraniireducens Rf4.</title>
        <authorList>
            <consortium name="US DOE Joint Genome Institute"/>
            <person name="Copeland A."/>
            <person name="Lucas S."/>
            <person name="Lapidus A."/>
            <person name="Barry K."/>
            <person name="Detter J.C."/>
            <person name="Glavina del Rio T."/>
            <person name="Hammon N."/>
            <person name="Israni S."/>
            <person name="Dalin E."/>
            <person name="Tice H."/>
            <person name="Pitluck S."/>
            <person name="Chertkov O."/>
            <person name="Brettin T."/>
            <person name="Bruce D."/>
            <person name="Han C."/>
            <person name="Schmutz J."/>
            <person name="Larimer F."/>
            <person name="Land M."/>
            <person name="Hauser L."/>
            <person name="Kyrpides N."/>
            <person name="Mikhailova N."/>
            <person name="Shelobolina E."/>
            <person name="Aklujkar M."/>
            <person name="Lovley D."/>
            <person name="Richardson P."/>
        </authorList>
    </citation>
    <scope>NUCLEOTIDE SEQUENCE [LARGE SCALE GENOMIC DNA]</scope>
    <source>
        <strain>ATCC BAA-1134 / JCM 13001 / Rf4</strain>
    </source>
</reference>
<keyword id="KW-0067">ATP-binding</keyword>
<keyword id="KW-0963">Cytoplasm</keyword>
<keyword id="KW-0418">Kinase</keyword>
<keyword id="KW-0479">Metal-binding</keyword>
<keyword id="KW-0545">Nucleotide biosynthesis</keyword>
<keyword id="KW-0547">Nucleotide-binding</keyword>
<keyword id="KW-1185">Reference proteome</keyword>
<keyword id="KW-0808">Transferase</keyword>
<keyword id="KW-0862">Zinc</keyword>
<sequence>MNLILLGPPGAGKGTQAKLLIKRFQIPQISTGDILRAAVSEMTPMGVKAKGYMESGALVPDEVVVGIVRERLEKNDCLNGFILDGFPRTVAQADALKHMLVCMNMSIEHVVSMAVDKEELLQRITGRRTCRLCGKGYHVVFDPPRVSGRCDECLGELFQRDDDQEETMRKRLDVYEDQTAPLITYYENESLLRSIAGVGSIDDIQQRILSIIQGTHG</sequence>
<protein>
    <recommendedName>
        <fullName evidence="1">Adenylate kinase</fullName>
        <shortName evidence="1">AK</shortName>
        <ecNumber evidence="1">2.7.4.3</ecNumber>
    </recommendedName>
    <alternativeName>
        <fullName evidence="1">ATP-AMP transphosphorylase</fullName>
    </alternativeName>
    <alternativeName>
        <fullName evidence="1">ATP:AMP phosphotransferase</fullName>
    </alternativeName>
    <alternativeName>
        <fullName evidence="1">Adenylate monophosphate kinase</fullName>
    </alternativeName>
</protein>